<organism>
    <name type="scientific">Xanthomonas oryzae pv. oryzae (strain MAFF 311018)</name>
    <dbReference type="NCBI Taxonomy" id="342109"/>
    <lineage>
        <taxon>Bacteria</taxon>
        <taxon>Pseudomonadati</taxon>
        <taxon>Pseudomonadota</taxon>
        <taxon>Gammaproteobacteria</taxon>
        <taxon>Lysobacterales</taxon>
        <taxon>Lysobacteraceae</taxon>
        <taxon>Xanthomonas</taxon>
    </lineage>
</organism>
<proteinExistence type="inferred from homology"/>
<comment type="catalytic activity">
    <reaction evidence="1">
        <text>D-arabinose 5-phosphate + phosphoenolpyruvate + H2O = 3-deoxy-alpha-D-manno-2-octulosonate-8-phosphate + phosphate</text>
        <dbReference type="Rhea" id="RHEA:14053"/>
        <dbReference type="ChEBI" id="CHEBI:15377"/>
        <dbReference type="ChEBI" id="CHEBI:43474"/>
        <dbReference type="ChEBI" id="CHEBI:57693"/>
        <dbReference type="ChEBI" id="CHEBI:58702"/>
        <dbReference type="ChEBI" id="CHEBI:85985"/>
        <dbReference type="EC" id="2.5.1.55"/>
    </reaction>
</comment>
<comment type="pathway">
    <text evidence="1">Carbohydrate biosynthesis; 3-deoxy-D-manno-octulosonate biosynthesis; 3-deoxy-D-manno-octulosonate from D-ribulose 5-phosphate: step 2/3.</text>
</comment>
<comment type="pathway">
    <text evidence="1">Bacterial outer membrane biogenesis; lipopolysaccharide biosynthesis.</text>
</comment>
<comment type="subcellular location">
    <subcellularLocation>
        <location evidence="1">Cytoplasm</location>
    </subcellularLocation>
</comment>
<comment type="similarity">
    <text evidence="1">Belongs to the KdsA family.</text>
</comment>
<gene>
    <name evidence="1" type="primary">kdsA</name>
    <name type="ordered locus">XOO2816</name>
</gene>
<reference key="1">
    <citation type="journal article" date="2005" name="Jpn. Agric. Res. Q.">
        <title>Genome sequence of Xanthomonas oryzae pv. oryzae suggests contribution of large numbers of effector genes and insertion sequences to its race diversity.</title>
        <authorList>
            <person name="Ochiai H."/>
            <person name="Inoue Y."/>
            <person name="Takeya M."/>
            <person name="Sasaki A."/>
            <person name="Kaku H."/>
        </authorList>
    </citation>
    <scope>NUCLEOTIDE SEQUENCE [LARGE SCALE GENOMIC DNA]</scope>
    <source>
        <strain>MAFF 311018</strain>
    </source>
</reference>
<feature type="chain" id="PRO_0000304504" description="2-dehydro-3-deoxyphosphooctonate aldolase">
    <location>
        <begin position="1"/>
        <end position="276"/>
    </location>
</feature>
<accession>Q2P1K6</accession>
<evidence type="ECO:0000255" key="1">
    <source>
        <dbReference type="HAMAP-Rule" id="MF_00056"/>
    </source>
</evidence>
<keyword id="KW-0963">Cytoplasm</keyword>
<keyword id="KW-0448">Lipopolysaccharide biosynthesis</keyword>
<keyword id="KW-0808">Transferase</keyword>
<name>KDSA_XANOM</name>
<protein>
    <recommendedName>
        <fullName evidence="1">2-dehydro-3-deoxyphosphooctonate aldolase</fullName>
        <ecNumber evidence="1">2.5.1.55</ecNumber>
    </recommendedName>
    <alternativeName>
        <fullName evidence="1">3-deoxy-D-manno-octulosonic acid 8-phosphate synthase</fullName>
    </alternativeName>
    <alternativeName>
        <fullName evidence="1">KDO-8-phosphate synthase</fullName>
        <shortName evidence="1">KDO 8-P synthase</shortName>
        <shortName evidence="1">KDOPS</shortName>
    </alternativeName>
    <alternativeName>
        <fullName evidence="1">Phospho-2-dehydro-3-deoxyoctonate aldolase</fullName>
    </alternativeName>
</protein>
<sequence length="276" mass="29653">MKLCGFEVGLDQPLFLIAGPCVIESMQLQLDVAGKLKEITGKLGVNFIFKSSFDKANRTSGTSFRGPGLEEGLKVLDAVKRQIGVPVLTDVHEYTPMNEVAAVVDVLQTPAFLVRQTDFIKNVCAAGKPVNIKKGQFLAPWDMKPVVDKAKSTGNAQIMVCERGASFGYNNLVSDMRSLSVMRDTGCPVVFDATHSVQLPGGQGSSSGGQREFVPVLARAAVAVGISGLFAETHPDPSKALSDGPNAWPLDRMEELLETLMELDAVTKKHGFARFA</sequence>
<dbReference type="EC" id="2.5.1.55" evidence="1"/>
<dbReference type="EMBL" id="AP008229">
    <property type="protein sequence ID" value="BAE69571.1"/>
    <property type="molecule type" value="Genomic_DNA"/>
</dbReference>
<dbReference type="RefSeq" id="WP_011259531.1">
    <property type="nucleotide sequence ID" value="NC_007705.1"/>
</dbReference>
<dbReference type="SMR" id="Q2P1K6"/>
<dbReference type="KEGG" id="xom:XOO2816"/>
<dbReference type="HOGENOM" id="CLU_036666_0_0_6"/>
<dbReference type="UniPathway" id="UPA00030"/>
<dbReference type="UniPathway" id="UPA00357">
    <property type="reaction ID" value="UER00474"/>
</dbReference>
<dbReference type="GO" id="GO:0005737">
    <property type="term" value="C:cytoplasm"/>
    <property type="evidence" value="ECO:0007669"/>
    <property type="project" value="UniProtKB-SubCell"/>
</dbReference>
<dbReference type="GO" id="GO:0008676">
    <property type="term" value="F:3-deoxy-8-phosphooctulonate synthase activity"/>
    <property type="evidence" value="ECO:0007669"/>
    <property type="project" value="UniProtKB-UniRule"/>
</dbReference>
<dbReference type="GO" id="GO:0019294">
    <property type="term" value="P:keto-3-deoxy-D-manno-octulosonic acid biosynthetic process"/>
    <property type="evidence" value="ECO:0007669"/>
    <property type="project" value="UniProtKB-UniRule"/>
</dbReference>
<dbReference type="Gene3D" id="3.20.20.70">
    <property type="entry name" value="Aldolase class I"/>
    <property type="match status" value="1"/>
</dbReference>
<dbReference type="HAMAP" id="MF_00056">
    <property type="entry name" value="KDO8P_synth"/>
    <property type="match status" value="1"/>
</dbReference>
<dbReference type="InterPro" id="IPR013785">
    <property type="entry name" value="Aldolase_TIM"/>
</dbReference>
<dbReference type="InterPro" id="IPR006218">
    <property type="entry name" value="DAHP1/KDSA"/>
</dbReference>
<dbReference type="InterPro" id="IPR006269">
    <property type="entry name" value="KDO8P_synthase"/>
</dbReference>
<dbReference type="NCBIfam" id="TIGR01362">
    <property type="entry name" value="KDO8P_synth"/>
    <property type="match status" value="1"/>
</dbReference>
<dbReference type="NCBIfam" id="NF003543">
    <property type="entry name" value="PRK05198.1"/>
    <property type="match status" value="1"/>
</dbReference>
<dbReference type="PANTHER" id="PTHR21057">
    <property type="entry name" value="PHOSPHO-2-DEHYDRO-3-DEOXYHEPTONATE ALDOLASE"/>
    <property type="match status" value="1"/>
</dbReference>
<dbReference type="Pfam" id="PF00793">
    <property type="entry name" value="DAHP_synth_1"/>
    <property type="match status" value="1"/>
</dbReference>
<dbReference type="SUPFAM" id="SSF51569">
    <property type="entry name" value="Aldolase"/>
    <property type="match status" value="1"/>
</dbReference>